<keyword id="KW-0084">Basement membrane</keyword>
<keyword id="KW-0130">Cell adhesion</keyword>
<keyword id="KW-0175">Coiled coil</keyword>
<keyword id="KW-1015">Disulfide bond</keyword>
<keyword id="KW-0272">Extracellular matrix</keyword>
<keyword id="KW-0325">Glycoprotein</keyword>
<keyword id="KW-0424">Laminin EGF-like domain</keyword>
<keyword id="KW-1185">Reference proteome</keyword>
<keyword id="KW-0677">Repeat</keyword>
<keyword id="KW-0964">Secreted</keyword>
<keyword id="KW-0732">Signal</keyword>
<reference key="1">
    <citation type="journal article" date="2002" name="Development">
        <title>Zebrafish mutants identify an essential role for laminins in notochord formation.</title>
        <authorList>
            <person name="Parsons M.J."/>
            <person name="Pollard S.M."/>
            <person name="Saude L."/>
            <person name="Feldman B."/>
            <person name="Coutinho P."/>
            <person name="Hirst E.M.A."/>
            <person name="Stemple D.L."/>
        </authorList>
    </citation>
    <scope>NUCLEOTIDE SEQUENCE [MRNA]</scope>
</reference>
<reference key="2">
    <citation type="journal article" date="2019" name="Glia">
        <title>Genetic control of cellular morphogenesis in Mueller glia.</title>
        <authorList>
            <person name="Charlton-Perkins M."/>
            <person name="Almeida A.D."/>
            <person name="MacDonald R.B."/>
            <person name="Harris W.A."/>
        </authorList>
    </citation>
    <scope>FUNCTION</scope>
    <scope>DEVELOPMENTAL STAGE</scope>
    <scope>DISRUPTION PHENOTYPE</scope>
</reference>
<sequence>MLLRLELSALLLLLIAAPVRLQDECVGNSCYPNLGDLMVGRAAQLAASSTCGLYRPQNYCILGYLENERKCFTCDSRSPYNDYHNPSSHRIENIITTFQPERKMKWWQSENGVHEVSIQLDLEAMFQFSHLILTFKSFRPASMLVERSKDFGRTWKVFRYFAEDCANSFPGISEGPAHSIDDLVCDSRYSGAEPSTEGEVVLKALDPSFDIHDPYDSTIQGLITLTNLRVNFTRLLTLGDTLLTRRKRNPQDKYYYALYEMVVRGSCFCNGHASQCIPVDGARGDTFTEPGMVHGRCVCQHNTAGYNCERCQDFYHDAPWRPGGKADSDVCKRCNCHSHSEKCHFELARYLATGGVSGGVCDDCRNNRIGPQCELCGPFYYQDPQRSVDDPYACIPCDCDLDGSVDRGLCDPVNGQCVCKQNIEGERCDRCKVGFYGFSRDDPSGCQLCRCNFLGTIQVGNPCDPTTGRCICEHFAYGSQCDQCLPGYWGLGNTVYGCIPCDCDIGGALKTECSSVDGQCKCRPNMVGQKCNDPAPGYFLAPLDFYIYEAENAAPLAVISPFIGPPPFVYPTEGIPERPTKLPLCPPAPKPSSVPYREHITVQPSPAPHNPQVTLPMCEHYFRQRGYDFKISNGRLVVVKREKRQTRRRRQGQRTIPFEPGSPLQILLRQRANDQSITWTGLGFVRVQDGAGLRFTVSNIPATLDYYVVVRYEPESTDDWTAIVSILSIGSEDERCPNDQSNKMFTLPASGRTATLDLPVCLSDGNQYHVDITFRKQPSEDPHSSSFILIDSLGLIPKVESVPNFCSQSYLSQFQQYRCIELAVQAGGQTLPEVCEMLIGSMSAFIHNGAVSCNCHHVGAYGSSCSKFGGQCQCKPNVIGRCCDSCAPLTYGLGPNGCSPCDCDRSGSTTELCDQTTGQCSCRDGITGLQCNRCYPGYYGFPLCRRCQCNRLADICDPITGDCLDCREHSAGRNCERCEEGYVGDPVSGQPCEPCLCPDLNGSGRFFAFSCNKDPRSGAPYCECLPGHTGPQCDSCSPGFYGDLRLPGGRCKECCCNNNIDPRDGDACDPVTGECLRCLHNTEGPRCQSCKRGYYGNALAQDCKECSCDRRGTDDSKCPAGSPCFCDQDTGQCPCRPGVQGALCNECDDGYWNMDGDYGCQPCNCNREHALNYICDKITGQCLCQPEYGGRICDECGPNHFGNPDLQCMFCDCNLEGTVHPACDAYTGECLCKPGVTGPFCDECAPGHNNNFPACEPCHACNHLWEKIISDLSLDAERIETMMPCPEDFRSRPELQHLQNLLEKLQNVLNMGAQDELKKLEELLARIRNETEIIDPNIIIIDPTLLLNTDIDYIRLEFNKLLKNLREKAKEGPVTDIKAVNDIFNKIKKFYDEFTDSEKKVEAAKKVQEASRKTREKVTLELAKCQIGEMDKLERKVKALSAANINEEVCGAPGDAECEKAKCGGALCGKCGGPDCTGSLPISLNASKLAEMTEKNITALRSQLKEADAQLRNASEMTSYVKDQAENMMDKINRTKTKYEQEKTDTKALIEKVKTYLQDELVKPEDIEKLANAVLSIQLPKSPDEIKDMIEDIKKILANITEFNDDLEYLEKQAKIAGNMKERAKEILNRTELINVKEIEKALNDTAKLHDKIFNDLDEAEQNNDVIREKVNETEPKLKNIEDHLNLTRAKTLLDEIEALKNKTEMNRAQGKEAKDTADAALNSANDTGKDLEELKEQFEKLKLNSTNQNVSSEANERLKNITMEAENLAKHVEDKMKEIEDLEEKILLSNERKDEMRKELEALQKEADDLKKFIVDKVQRYNLCSP</sequence>
<gene>
    <name type="primary">lamb4</name>
</gene>
<organism>
    <name type="scientific">Danio rerio</name>
    <name type="common">Zebrafish</name>
    <name type="synonym">Brachydanio rerio</name>
    <dbReference type="NCBI Taxonomy" id="7955"/>
    <lineage>
        <taxon>Eukaryota</taxon>
        <taxon>Metazoa</taxon>
        <taxon>Chordata</taxon>
        <taxon>Craniata</taxon>
        <taxon>Vertebrata</taxon>
        <taxon>Euteleostomi</taxon>
        <taxon>Actinopterygii</taxon>
        <taxon>Neopterygii</taxon>
        <taxon>Teleostei</taxon>
        <taxon>Ostariophysi</taxon>
        <taxon>Cypriniformes</taxon>
        <taxon>Danionidae</taxon>
        <taxon>Danioninae</taxon>
        <taxon>Danio</taxon>
    </lineage>
</organism>
<feature type="signal peptide" evidence="1">
    <location>
        <begin position="1"/>
        <end position="21"/>
    </location>
</feature>
<feature type="chain" id="PRO_0000312858" description="Laminin subunit beta-4">
    <location>
        <begin position="22"/>
        <end position="1827"/>
    </location>
</feature>
<feature type="domain" description="Laminin N-terminal" evidence="4">
    <location>
        <begin position="26"/>
        <end position="266"/>
    </location>
</feature>
<feature type="domain" description="Laminin EGF-like 1" evidence="2">
    <location>
        <begin position="267"/>
        <end position="333"/>
    </location>
</feature>
<feature type="domain" description="Laminin EGF-like 2" evidence="2">
    <location>
        <begin position="334"/>
        <end position="396"/>
    </location>
</feature>
<feature type="domain" description="Laminin EGF-like 3" evidence="2">
    <location>
        <begin position="397"/>
        <end position="448"/>
    </location>
</feature>
<feature type="domain" description="Laminin EGF-like 4" evidence="2">
    <location>
        <begin position="449"/>
        <end position="500"/>
    </location>
</feature>
<feature type="domain" description="Laminin EGF-like 5; truncated" evidence="2">
    <location>
        <begin position="501"/>
        <end position="544"/>
    </location>
</feature>
<feature type="domain" description="Laminin IV type B" evidence="3">
    <location>
        <begin position="540"/>
        <end position="847"/>
    </location>
</feature>
<feature type="domain" description="Laminin EGF-like 6" evidence="2">
    <location>
        <begin position="853"/>
        <end position="900"/>
    </location>
</feature>
<feature type="domain" description="Laminin EGF-like 7" evidence="2">
    <location>
        <begin position="901"/>
        <end position="946"/>
    </location>
</feature>
<feature type="domain" description="Laminin EGF-like 8" evidence="2">
    <location>
        <begin position="947"/>
        <end position="994"/>
    </location>
</feature>
<feature type="domain" description="Laminin EGF-like 9" evidence="2">
    <location>
        <begin position="995"/>
        <end position="1053"/>
    </location>
</feature>
<feature type="domain" description="Laminin EGF-like 10" evidence="2">
    <location>
        <begin position="1054"/>
        <end position="1105"/>
    </location>
</feature>
<feature type="domain" description="Laminin EGF-like 11" evidence="2">
    <location>
        <begin position="1106"/>
        <end position="1162"/>
    </location>
</feature>
<feature type="domain" description="Laminin EGF-like 12" evidence="2">
    <location>
        <begin position="1163"/>
        <end position="1210"/>
    </location>
</feature>
<feature type="domain" description="Laminin EGF-like 13" evidence="2">
    <location>
        <begin position="1211"/>
        <end position="1257"/>
    </location>
</feature>
<feature type="region of interest" description="Domain II">
    <location>
        <begin position="1258"/>
        <end position="1449"/>
    </location>
</feature>
<feature type="region of interest" description="Domain alpha">
    <location>
        <begin position="1450"/>
        <end position="1476"/>
    </location>
</feature>
<feature type="region of interest" description="Domain I">
    <location>
        <begin position="1477"/>
        <end position="1827"/>
    </location>
</feature>
<feature type="coiled-coil region" evidence="1">
    <location>
        <begin position="1294"/>
        <end position="1335"/>
    </location>
</feature>
<feature type="coiled-coil region" evidence="1">
    <location>
        <begin position="1385"/>
        <end position="1449"/>
    </location>
</feature>
<feature type="coiled-coil region" evidence="1">
    <location>
        <begin position="1485"/>
        <end position="1554"/>
    </location>
</feature>
<feature type="coiled-coil region" evidence="1">
    <location>
        <begin position="1584"/>
        <end position="1820"/>
    </location>
</feature>
<feature type="glycosylation site" description="N-linked (GlcNAc...) asparagine" evidence="1">
    <location>
        <position position="231"/>
    </location>
</feature>
<feature type="glycosylation site" description="N-linked (GlcNAc...) asparagine" evidence="1">
    <location>
        <position position="1001"/>
    </location>
</feature>
<feature type="glycosylation site" description="N-linked (GlcNAc...) asparagine" evidence="1">
    <location>
        <position position="1329"/>
    </location>
</feature>
<feature type="glycosylation site" description="N-linked (GlcNAc...) asparagine" evidence="1">
    <location>
        <position position="1485"/>
    </location>
</feature>
<feature type="glycosylation site" description="N-linked (GlcNAc...) asparagine" evidence="1">
    <location>
        <position position="1496"/>
    </location>
</feature>
<feature type="glycosylation site" description="N-linked (GlcNAc...) asparagine" evidence="1">
    <location>
        <position position="1513"/>
    </location>
</feature>
<feature type="glycosylation site" description="N-linked (GlcNAc...) asparagine" evidence="1">
    <location>
        <position position="1533"/>
    </location>
</feature>
<feature type="glycosylation site" description="N-linked (GlcNAc...) asparagine" evidence="1">
    <location>
        <position position="1599"/>
    </location>
</feature>
<feature type="glycosylation site" description="N-linked (GlcNAc...) asparagine" evidence="1">
    <location>
        <position position="1629"/>
    </location>
</feature>
<feature type="glycosylation site" description="N-linked (GlcNAc...) asparagine" evidence="1">
    <location>
        <position position="1644"/>
    </location>
</feature>
<feature type="glycosylation site" description="N-linked (GlcNAc...) asparagine" evidence="1">
    <location>
        <position position="1672"/>
    </location>
</feature>
<feature type="glycosylation site" description="N-linked (GlcNAc...) asparagine" evidence="1">
    <location>
        <position position="1686"/>
    </location>
</feature>
<feature type="glycosylation site" description="N-linked (GlcNAc...) asparagine" evidence="1">
    <location>
        <position position="1702"/>
    </location>
</feature>
<feature type="glycosylation site" description="N-linked (GlcNAc...) asparagine" evidence="1">
    <location>
        <position position="1726"/>
    </location>
</feature>
<feature type="glycosylation site" description="N-linked (GlcNAc...) asparagine" evidence="1">
    <location>
        <position position="1745"/>
    </location>
</feature>
<feature type="glycosylation site" description="N-linked (GlcNAc...) asparagine" evidence="1">
    <location>
        <position position="1750"/>
    </location>
</feature>
<feature type="glycosylation site" description="N-linked (GlcNAc...) asparagine" evidence="1">
    <location>
        <position position="1761"/>
    </location>
</feature>
<feature type="disulfide bond" evidence="2">
    <location>
        <begin position="267"/>
        <end position="276" status="uncertain"/>
    </location>
</feature>
<feature type="disulfide bond" evidence="2">
    <location>
        <begin position="269"/>
        <end position="297"/>
    </location>
</feature>
<feature type="disulfide bond" evidence="2">
    <location>
        <begin position="299"/>
        <end position="308"/>
    </location>
</feature>
<feature type="disulfide bond" evidence="2">
    <location>
        <begin position="311"/>
        <end position="331"/>
    </location>
</feature>
<feature type="disulfide bond" evidence="2">
    <location>
        <begin position="334"/>
        <end position="343"/>
    </location>
</feature>
<feature type="disulfide bond" evidence="2">
    <location>
        <begin position="336"/>
        <end position="361"/>
    </location>
</feature>
<feature type="disulfide bond" evidence="2">
    <location>
        <begin position="364"/>
        <end position="373"/>
    </location>
</feature>
<feature type="disulfide bond" evidence="2">
    <location>
        <begin position="376"/>
        <end position="394"/>
    </location>
</feature>
<feature type="disulfide bond" evidence="2">
    <location>
        <begin position="397"/>
        <end position="410"/>
    </location>
</feature>
<feature type="disulfide bond" evidence="2">
    <location>
        <begin position="399"/>
        <end position="417"/>
    </location>
</feature>
<feature type="disulfide bond" evidence="2">
    <location>
        <begin position="419"/>
        <end position="428"/>
    </location>
</feature>
<feature type="disulfide bond" evidence="2">
    <location>
        <begin position="431"/>
        <end position="446"/>
    </location>
</feature>
<feature type="disulfide bond" evidence="2">
    <location>
        <begin position="449"/>
        <end position="463"/>
    </location>
</feature>
<feature type="disulfide bond" evidence="2">
    <location>
        <begin position="451"/>
        <end position="470"/>
    </location>
</feature>
<feature type="disulfide bond" evidence="2">
    <location>
        <begin position="472"/>
        <end position="481"/>
    </location>
</feature>
<feature type="disulfide bond" evidence="2">
    <location>
        <begin position="484"/>
        <end position="498"/>
    </location>
</feature>
<feature type="disulfide bond" evidence="2">
    <location>
        <begin position="501"/>
        <end position="513"/>
    </location>
</feature>
<feature type="disulfide bond" evidence="2">
    <location>
        <begin position="503"/>
        <end position="520"/>
    </location>
</feature>
<feature type="disulfide bond" evidence="2">
    <location>
        <begin position="522"/>
        <end position="531"/>
    </location>
</feature>
<feature type="disulfide bond" evidence="2">
    <location>
        <begin position="853"/>
        <end position="865"/>
    </location>
</feature>
<feature type="disulfide bond" evidence="2">
    <location>
        <begin position="855"/>
        <end position="872"/>
    </location>
</feature>
<feature type="disulfide bond" evidence="2">
    <location>
        <begin position="874"/>
        <end position="883"/>
    </location>
</feature>
<feature type="disulfide bond" evidence="2">
    <location>
        <begin position="886"/>
        <end position="898"/>
    </location>
</feature>
<feature type="disulfide bond" evidence="2">
    <location>
        <begin position="901"/>
        <end position="913"/>
    </location>
</feature>
<feature type="disulfide bond" evidence="2">
    <location>
        <begin position="903"/>
        <end position="920"/>
    </location>
</feature>
<feature type="disulfide bond" evidence="2">
    <location>
        <begin position="922"/>
        <end position="931"/>
    </location>
</feature>
<feature type="disulfide bond" evidence="2">
    <location>
        <begin position="934"/>
        <end position="944"/>
    </location>
</feature>
<feature type="disulfide bond" evidence="2">
    <location>
        <begin position="947"/>
        <end position="956"/>
    </location>
</feature>
<feature type="disulfide bond" evidence="2">
    <location>
        <begin position="949"/>
        <end position="963"/>
    </location>
</feature>
<feature type="disulfide bond" evidence="2">
    <location>
        <begin position="966"/>
        <end position="975"/>
    </location>
</feature>
<feature type="disulfide bond" evidence="2">
    <location>
        <begin position="978"/>
        <end position="992"/>
    </location>
</feature>
<feature type="disulfide bond" evidence="2">
    <location>
        <begin position="995"/>
        <end position="1011"/>
    </location>
</feature>
<feature type="disulfide bond" evidence="2">
    <location>
        <begin position="997"/>
        <end position="1022"/>
    </location>
</feature>
<feature type="disulfide bond" evidence="2">
    <location>
        <begin position="1024"/>
        <end position="1033"/>
    </location>
</feature>
<feature type="disulfide bond" evidence="2">
    <location>
        <begin position="1036"/>
        <end position="1051"/>
    </location>
</feature>
<feature type="disulfide bond" evidence="2">
    <location>
        <begin position="1054"/>
        <end position="1068"/>
    </location>
</feature>
<feature type="disulfide bond" evidence="2">
    <location>
        <begin position="1056"/>
        <end position="1075"/>
    </location>
</feature>
<feature type="disulfide bond" evidence="2">
    <location>
        <begin position="1078"/>
        <end position="1087"/>
    </location>
</feature>
<feature type="disulfide bond" evidence="2">
    <location>
        <begin position="1090"/>
        <end position="1103"/>
    </location>
</feature>
<feature type="disulfide bond" evidence="2">
    <location>
        <begin position="1106"/>
        <end position="1126"/>
    </location>
</feature>
<feature type="disulfide bond" evidence="2">
    <location>
        <begin position="1108"/>
        <end position="1133"/>
    </location>
</feature>
<feature type="disulfide bond" evidence="2">
    <location>
        <begin position="1135"/>
        <end position="1144"/>
    </location>
</feature>
<feature type="disulfide bond" evidence="2">
    <location>
        <begin position="1147"/>
        <end position="1160"/>
    </location>
</feature>
<feature type="disulfide bond" evidence="2">
    <location>
        <begin position="1163"/>
        <end position="1175"/>
    </location>
</feature>
<feature type="disulfide bond" evidence="2">
    <location>
        <begin position="1165"/>
        <end position="1182"/>
    </location>
</feature>
<feature type="disulfide bond" evidence="2">
    <location>
        <begin position="1184"/>
        <end position="1193"/>
    </location>
</feature>
<feature type="disulfide bond" evidence="2">
    <location>
        <begin position="1196"/>
        <end position="1208"/>
    </location>
</feature>
<feature type="disulfide bond" evidence="2">
    <location>
        <begin position="1211"/>
        <end position="1223"/>
    </location>
</feature>
<feature type="disulfide bond" evidence="2">
    <location>
        <begin position="1213"/>
        <end position="1230"/>
    </location>
</feature>
<feature type="disulfide bond" evidence="2">
    <location>
        <begin position="1232"/>
        <end position="1241"/>
    </location>
</feature>
<feature type="disulfide bond" evidence="2">
    <location>
        <begin position="1244"/>
        <end position="1255"/>
    </location>
</feature>
<feature type="disulfide bond" description="Interchain" evidence="6">
    <location>
        <position position="1258"/>
    </location>
</feature>
<feature type="disulfide bond" description="Interchain" evidence="6">
    <location>
        <position position="1261"/>
    </location>
</feature>
<feature type="disulfide bond" description="Interchain" evidence="6">
    <location>
        <position position="1825"/>
    </location>
</feature>
<evidence type="ECO:0000255" key="1"/>
<evidence type="ECO:0000255" key="2">
    <source>
        <dbReference type="PROSITE-ProRule" id="PRU00460"/>
    </source>
</evidence>
<evidence type="ECO:0000255" key="3">
    <source>
        <dbReference type="PROSITE-ProRule" id="PRU00462"/>
    </source>
</evidence>
<evidence type="ECO:0000255" key="4">
    <source>
        <dbReference type="PROSITE-ProRule" id="PRU00466"/>
    </source>
</evidence>
<evidence type="ECO:0000269" key="5">
    <source>
    </source>
</evidence>
<evidence type="ECO:0000305" key="6"/>
<accession>Q8JHV6</accession>
<name>LAMB4_DANRE</name>
<proteinExistence type="evidence at transcript level"/>
<protein>
    <recommendedName>
        <fullName>Laminin subunit beta-4</fullName>
    </recommendedName>
</protein>
<dbReference type="EMBL" id="AF468050">
    <property type="protein sequence ID" value="AAM61768.1"/>
    <property type="molecule type" value="mRNA"/>
</dbReference>
<dbReference type="RefSeq" id="NP_775383.1">
    <property type="nucleotide sequence ID" value="NM_173276.1"/>
</dbReference>
<dbReference type="SMR" id="Q8JHV6"/>
<dbReference type="FunCoup" id="Q8JHV6">
    <property type="interactions" value="359"/>
</dbReference>
<dbReference type="STRING" id="7955.ENSDARP00000058399"/>
<dbReference type="GlyCosmos" id="Q8JHV6">
    <property type="glycosylation" value="17 sites, No reported glycans"/>
</dbReference>
<dbReference type="PaxDb" id="7955-ENSDARP00000106452"/>
<dbReference type="GeneID" id="286831"/>
<dbReference type="KEGG" id="dre:286831"/>
<dbReference type="AGR" id="ZFIN:ZDB-GENE-021226-2"/>
<dbReference type="CTD" id="22798"/>
<dbReference type="ZFIN" id="ZDB-GENE-021226-2">
    <property type="gene designation" value="lamb4"/>
</dbReference>
<dbReference type="eggNOG" id="KOG0994">
    <property type="taxonomic scope" value="Eukaryota"/>
</dbReference>
<dbReference type="InParanoid" id="Q8JHV6"/>
<dbReference type="OrthoDB" id="5985440at2759"/>
<dbReference type="PhylomeDB" id="Q8JHV6"/>
<dbReference type="PRO" id="PR:Q8JHV6"/>
<dbReference type="Proteomes" id="UP000000437">
    <property type="component" value="Chromosome 25"/>
</dbReference>
<dbReference type="GO" id="GO:0005576">
    <property type="term" value="C:extracellular region"/>
    <property type="evidence" value="ECO:0007669"/>
    <property type="project" value="UniProtKB-KW"/>
</dbReference>
<dbReference type="GO" id="GO:0043256">
    <property type="term" value="C:laminin complex"/>
    <property type="evidence" value="ECO:0000318"/>
    <property type="project" value="GO_Central"/>
</dbReference>
<dbReference type="GO" id="GO:0009887">
    <property type="term" value="P:animal organ morphogenesis"/>
    <property type="evidence" value="ECO:0000318"/>
    <property type="project" value="GO_Central"/>
</dbReference>
<dbReference type="GO" id="GO:0007411">
    <property type="term" value="P:axon guidance"/>
    <property type="evidence" value="ECO:0000318"/>
    <property type="project" value="GO_Central"/>
</dbReference>
<dbReference type="GO" id="GO:0070831">
    <property type="term" value="P:basement membrane assembly"/>
    <property type="evidence" value="ECO:0000318"/>
    <property type="project" value="GO_Central"/>
</dbReference>
<dbReference type="GO" id="GO:0016477">
    <property type="term" value="P:cell migration"/>
    <property type="evidence" value="ECO:0000318"/>
    <property type="project" value="GO_Central"/>
</dbReference>
<dbReference type="GO" id="GO:0010842">
    <property type="term" value="P:retina layer formation"/>
    <property type="evidence" value="ECO:0000315"/>
    <property type="project" value="UniProtKB"/>
</dbReference>
<dbReference type="GO" id="GO:0034446">
    <property type="term" value="P:substrate adhesion-dependent cell spreading"/>
    <property type="evidence" value="ECO:0000318"/>
    <property type="project" value="GO_Central"/>
</dbReference>
<dbReference type="GO" id="GO:0009888">
    <property type="term" value="P:tissue development"/>
    <property type="evidence" value="ECO:0000318"/>
    <property type="project" value="GO_Central"/>
</dbReference>
<dbReference type="CDD" id="cd22301">
    <property type="entry name" value="cc_LAMB4_C"/>
    <property type="match status" value="1"/>
</dbReference>
<dbReference type="CDD" id="cd00055">
    <property type="entry name" value="EGF_Lam"/>
    <property type="match status" value="13"/>
</dbReference>
<dbReference type="CDD" id="cd00176">
    <property type="entry name" value="SPEC"/>
    <property type="match status" value="1"/>
</dbReference>
<dbReference type="FunFam" id="2.10.25.10:FF:000011">
    <property type="entry name" value="Cadherin EGF LAG seven-pass G-type receptor"/>
    <property type="match status" value="1"/>
</dbReference>
<dbReference type="FunFam" id="2.10.25.10:FF:000084">
    <property type="entry name" value="Laminin subunit alpha 3"/>
    <property type="match status" value="1"/>
</dbReference>
<dbReference type="FunFam" id="2.10.25.10:FF:000209">
    <property type="entry name" value="Laminin subunit alpha 5"/>
    <property type="match status" value="1"/>
</dbReference>
<dbReference type="FunFam" id="2.10.25.10:FF:000065">
    <property type="entry name" value="Laminin subunit beta 1"/>
    <property type="match status" value="1"/>
</dbReference>
<dbReference type="FunFam" id="2.10.25.10:FF:000130">
    <property type="entry name" value="Laminin subunit beta 1"/>
    <property type="match status" value="1"/>
</dbReference>
<dbReference type="FunFam" id="2.10.25.10:FF:000138">
    <property type="entry name" value="Laminin subunit beta 1"/>
    <property type="match status" value="1"/>
</dbReference>
<dbReference type="FunFam" id="2.10.25.10:FF:000145">
    <property type="entry name" value="Laminin subunit beta 1"/>
    <property type="match status" value="1"/>
</dbReference>
<dbReference type="FunFam" id="2.60.120.260:FF:000010">
    <property type="entry name" value="Laminin subunit beta 1"/>
    <property type="match status" value="1"/>
</dbReference>
<dbReference type="FunFam" id="2.10.25.10:FF:000135">
    <property type="entry name" value="Laminin subunit beta 4"/>
    <property type="match status" value="2"/>
</dbReference>
<dbReference type="FunFam" id="2.170.300.10:FF:000001">
    <property type="entry name" value="Laminin subunit beta-1"/>
    <property type="match status" value="1"/>
</dbReference>
<dbReference type="Gene3D" id="2.60.120.260">
    <property type="entry name" value="Galactose-binding domain-like"/>
    <property type="match status" value="1"/>
</dbReference>
<dbReference type="Gene3D" id="2.10.25.10">
    <property type="entry name" value="Laminin"/>
    <property type="match status" value="11"/>
</dbReference>
<dbReference type="Gene3D" id="2.170.300.10">
    <property type="entry name" value="Tie2 ligand-binding domain superfamily"/>
    <property type="match status" value="1"/>
</dbReference>
<dbReference type="InterPro" id="IPR000742">
    <property type="entry name" value="EGF-like_dom"/>
</dbReference>
<dbReference type="InterPro" id="IPR056558">
    <property type="entry name" value="LAMB1-4_helical"/>
</dbReference>
<dbReference type="InterPro" id="IPR056860">
    <property type="entry name" value="LAMB4_dom"/>
</dbReference>
<dbReference type="InterPro" id="IPR050440">
    <property type="entry name" value="Laminin/Netrin_ECM"/>
</dbReference>
<dbReference type="InterPro" id="IPR013015">
    <property type="entry name" value="Laminin_IV_B"/>
</dbReference>
<dbReference type="InterPro" id="IPR008211">
    <property type="entry name" value="Laminin_N"/>
</dbReference>
<dbReference type="InterPro" id="IPR002049">
    <property type="entry name" value="LE_dom"/>
</dbReference>
<dbReference type="InterPro" id="IPR056863">
    <property type="entry name" value="LMN_ATRN_NET-like_EGF"/>
</dbReference>
<dbReference type="InterPro" id="IPR018159">
    <property type="entry name" value="Spectrin/alpha-actinin"/>
</dbReference>
<dbReference type="PANTHER" id="PTHR10574:SF406">
    <property type="entry name" value="LAMININ SUBUNIT ALPHA 5"/>
    <property type="match status" value="1"/>
</dbReference>
<dbReference type="PANTHER" id="PTHR10574">
    <property type="entry name" value="NETRIN/LAMININ-RELATED"/>
    <property type="match status" value="1"/>
</dbReference>
<dbReference type="Pfam" id="PF00053">
    <property type="entry name" value="EGF_laminin"/>
    <property type="match status" value="11"/>
</dbReference>
<dbReference type="Pfam" id="PF24973">
    <property type="entry name" value="EGF_LMN_ATRN"/>
    <property type="match status" value="2"/>
</dbReference>
<dbReference type="Pfam" id="PF23219">
    <property type="entry name" value="LAMB1"/>
    <property type="match status" value="1"/>
</dbReference>
<dbReference type="Pfam" id="PF24999">
    <property type="entry name" value="LAMB4"/>
    <property type="match status" value="1"/>
</dbReference>
<dbReference type="Pfam" id="PF21199">
    <property type="entry name" value="LAMININ_IV_B"/>
    <property type="match status" value="1"/>
</dbReference>
<dbReference type="Pfam" id="PF00055">
    <property type="entry name" value="Laminin_N"/>
    <property type="match status" value="1"/>
</dbReference>
<dbReference type="PRINTS" id="PR00011">
    <property type="entry name" value="EGFLAMININ"/>
</dbReference>
<dbReference type="SMART" id="SM00181">
    <property type="entry name" value="EGF"/>
    <property type="match status" value="8"/>
</dbReference>
<dbReference type="SMART" id="SM00180">
    <property type="entry name" value="EGF_Lam"/>
    <property type="match status" value="13"/>
</dbReference>
<dbReference type="SMART" id="SM00136">
    <property type="entry name" value="LamNT"/>
    <property type="match status" value="1"/>
</dbReference>
<dbReference type="SUPFAM" id="SSF57196">
    <property type="entry name" value="EGF/Laminin"/>
    <property type="match status" value="13"/>
</dbReference>
<dbReference type="PROSITE" id="PS00022">
    <property type="entry name" value="EGF_1"/>
    <property type="match status" value="10"/>
</dbReference>
<dbReference type="PROSITE" id="PS01248">
    <property type="entry name" value="EGF_LAM_1"/>
    <property type="match status" value="11"/>
</dbReference>
<dbReference type="PROSITE" id="PS50027">
    <property type="entry name" value="EGF_LAM_2"/>
    <property type="match status" value="13"/>
</dbReference>
<dbReference type="PROSITE" id="PS51116">
    <property type="entry name" value="LAMININ_IVB"/>
    <property type="match status" value="1"/>
</dbReference>
<dbReference type="PROSITE" id="PS51117">
    <property type="entry name" value="LAMININ_NTER"/>
    <property type="match status" value="1"/>
</dbReference>
<comment type="function">
    <text evidence="5">Binding to cells via a high affinity receptor, laminin is thought to mediate the attachment, migration and organization of cells into tissues during embryonic development by interacting with other extracellular matrix components. Positively regulates apical-basal distribution of Muller glia cells in the retina (PubMed:30924555).</text>
</comment>
<comment type="subunit">
    <text>Laminin is a complex glycoprotein, consisting of three different polypeptide chains (alpha, beta, gamma), which are bound to each other by disulfide bonds into a cross-shaped molecule comprising one long and three short arms with globules at each end.</text>
</comment>
<comment type="subcellular location">
    <subcellularLocation>
        <location>Secreted</location>
        <location>Extracellular space</location>
        <location>Extracellular matrix</location>
        <location>Basement membrane</location>
    </subcellularLocation>
</comment>
<comment type="developmental stage">
    <text evidence="5">Abundantly expressed in the eye at 48 hpf.</text>
</comment>
<comment type="domain">
    <text>The alpha-helical domains I and II are thought to interact with other laminin chains to form a coiled coil structure.</text>
</comment>
<comment type="domain">
    <text>Domains VI and IV are globular.</text>
</comment>
<comment type="disruption phenotype">
    <text evidence="5">Significant defects in apical-basal distribution of Muller glia cell bodies in the retina.</text>
</comment>